<keyword id="KW-0106">Calcium</keyword>
<keyword id="KW-0903">Direct protein sequencing</keyword>
<keyword id="KW-1015">Disulfide bond</keyword>
<keyword id="KW-0456">Lyase</keyword>
<keyword id="KW-0479">Metal-binding</keyword>
<keyword id="KW-0964">Secreted</keyword>
<keyword id="KW-0732">Signal</keyword>
<dbReference type="EC" id="4.2.2.2"/>
<dbReference type="EMBL" id="D00217">
    <property type="protein sequence ID" value="BAA00155.1"/>
    <property type="molecule type" value="Genomic_DNA"/>
</dbReference>
<dbReference type="EMBL" id="S51490">
    <property type="protein sequence ID" value="AAC60423.1"/>
    <property type="molecule type" value="Genomic_DNA"/>
</dbReference>
<dbReference type="PIR" id="JC1314">
    <property type="entry name" value="JC1314"/>
</dbReference>
<dbReference type="RefSeq" id="WP_039492152.1">
    <property type="nucleotide sequence ID" value="NZ_CP034938.1"/>
</dbReference>
<dbReference type="SMR" id="P0C1C0"/>
<dbReference type="CAZy" id="PL1">
    <property type="family name" value="Polysaccharide Lyase Family 1"/>
</dbReference>
<dbReference type="GeneID" id="51391439"/>
<dbReference type="UniPathway" id="UPA00545">
    <property type="reaction ID" value="UER00824"/>
</dbReference>
<dbReference type="GO" id="GO:0005576">
    <property type="term" value="C:extracellular region"/>
    <property type="evidence" value="ECO:0007669"/>
    <property type="project" value="UniProtKB-SubCell"/>
</dbReference>
<dbReference type="GO" id="GO:0046872">
    <property type="term" value="F:metal ion binding"/>
    <property type="evidence" value="ECO:0007669"/>
    <property type="project" value="UniProtKB-KW"/>
</dbReference>
<dbReference type="GO" id="GO:0030570">
    <property type="term" value="F:pectate lyase activity"/>
    <property type="evidence" value="ECO:0007669"/>
    <property type="project" value="UniProtKB-EC"/>
</dbReference>
<dbReference type="GO" id="GO:0045490">
    <property type="term" value="P:pectin catabolic process"/>
    <property type="evidence" value="ECO:0007669"/>
    <property type="project" value="UniProtKB-UniPathway"/>
</dbReference>
<dbReference type="Gene3D" id="2.160.20.10">
    <property type="entry name" value="Single-stranded right-handed beta-helix, Pectin lyase-like"/>
    <property type="match status" value="1"/>
</dbReference>
<dbReference type="InterPro" id="IPR002022">
    <property type="entry name" value="Pec_lyase"/>
</dbReference>
<dbReference type="InterPro" id="IPR012334">
    <property type="entry name" value="Pectin_lyas_fold"/>
</dbReference>
<dbReference type="InterPro" id="IPR011050">
    <property type="entry name" value="Pectin_lyase_fold/virulence"/>
</dbReference>
<dbReference type="InterPro" id="IPR045032">
    <property type="entry name" value="PEL"/>
</dbReference>
<dbReference type="PANTHER" id="PTHR31683">
    <property type="entry name" value="PECTATE LYASE 18-RELATED"/>
    <property type="match status" value="1"/>
</dbReference>
<dbReference type="PANTHER" id="PTHR31683:SF18">
    <property type="entry name" value="PECTATE LYASE 21-RELATED"/>
    <property type="match status" value="1"/>
</dbReference>
<dbReference type="Pfam" id="PF00544">
    <property type="entry name" value="Pectate_lyase_4"/>
    <property type="match status" value="1"/>
</dbReference>
<dbReference type="SMART" id="SM00656">
    <property type="entry name" value="Amb_all"/>
    <property type="match status" value="1"/>
</dbReference>
<dbReference type="SUPFAM" id="SSF51126">
    <property type="entry name" value="Pectin lyase-like"/>
    <property type="match status" value="1"/>
</dbReference>
<reference key="1">
    <citation type="journal article" date="1988" name="Agric. Biol. Chem.">
        <title>DNA structure of pectate lyase I gene cloned from Erwinia carotovora.</title>
        <authorList>
            <person name="Ito K."/>
            <person name="Kobayashi R."/>
            <person name="Nikaido N."/>
            <person name="Izaki K."/>
        </authorList>
    </citation>
    <scope>NUCLEOTIDE SEQUENCE [GENOMIC DNA]</scope>
    <scope>PROTEIN SEQUENCE OF 23-32</scope>
    <source>
        <strain>Er</strain>
    </source>
</reference>
<reference key="2">
    <citation type="journal article" date="1992" name="Biosci. Biotechnol. Biochem.">
        <title>Molecular cloning and sequencing of the extracellular pectate lyase II gene from Erwinia carotovora Er.</title>
        <authorList>
            <person name="Yoshida A."/>
            <person name="Matsuo Y."/>
            <person name="Kamio Y."/>
            <person name="Izaki K."/>
        </authorList>
    </citation>
    <scope>NUCLEOTIDE SEQUENCE [GENOMIC DNA]</scope>
    <scope>SEQUENCE REVISION</scope>
    <source>
        <strain>Er</strain>
    </source>
</reference>
<protein>
    <recommendedName>
        <fullName>Pectate lyase 1</fullName>
        <ecNumber>4.2.2.2</ecNumber>
    </recommendedName>
    <alternativeName>
        <fullName>Pectate lyase A</fullName>
        <shortName>PLA</shortName>
    </alternativeName>
    <alternativeName>
        <fullName>Pectate lyase I</fullName>
        <shortName>PEL I</shortName>
    </alternativeName>
</protein>
<sequence length="374" mass="40153">MKYLLPSAAAGLLLLAAQPTMAANTGGYATTDGGDVSGAVKKTARSLQEIVDIIEAAKKDSSGKAVKGGAYPLVITYNGNEDALIKAAEANICGQWSKDPRGVEIKEFTKGITILGTNGSSANFGIWMVNSSNVVVRNMRFGYMPGGAKDGDAIRIDNSPNVWIDHNEIFAKNFECAGTPDNDTTFESAVDIKKGATNVTVSYNYIHGVKKVGLSGSSNTDTGRDLTYHHNIYSDVNSRLPLQRGGKVHAYNNLYDGIKSSGFNVRQKGIALIESNWFENALNPVTARNDDSNFGTWELRNNNITSPSDFAKYKITWGKPSTPHINADDWKSTGKFPAVPYSYSPVSAQCVKDKLASYAGVGKNLAVLTAANCK</sequence>
<organism>
    <name type="scientific">Pectobacterium carotovorum</name>
    <name type="common">Erwinia carotovora</name>
    <dbReference type="NCBI Taxonomy" id="554"/>
    <lineage>
        <taxon>Bacteria</taxon>
        <taxon>Pseudomonadati</taxon>
        <taxon>Pseudomonadota</taxon>
        <taxon>Gammaproteobacteria</taxon>
        <taxon>Enterobacterales</taxon>
        <taxon>Pectobacteriaceae</taxon>
        <taxon>Pectobacterium</taxon>
    </lineage>
</organism>
<comment type="function">
    <text>Involved in maceration and soft-rotting of plant tissue.</text>
</comment>
<comment type="catalytic activity">
    <reaction>
        <text>Eliminative cleavage of (1-&gt;4)-alpha-D-galacturonan to give oligosaccharides with 4-deoxy-alpha-D-galact-4-enuronosyl groups at their non-reducing ends.</text>
        <dbReference type="EC" id="4.2.2.2"/>
    </reaction>
</comment>
<comment type="cofactor">
    <cofactor evidence="1">
        <name>Ca(2+)</name>
        <dbReference type="ChEBI" id="CHEBI:29108"/>
    </cofactor>
    <text evidence="1">Binds 1 Ca(2+) ion per subunit.</text>
</comment>
<comment type="pathway">
    <text>Glycan metabolism; pectin degradation; 2-dehydro-3-deoxy-D-gluconate from pectin: step 2/5.</text>
</comment>
<comment type="subcellular location">
    <subcellularLocation>
        <location>Secreted</location>
    </subcellularLocation>
</comment>
<comment type="similarity">
    <text evidence="4">Belongs to the polysaccharide lyase 1 family. PLADES subfamily.</text>
</comment>
<proteinExistence type="evidence at protein level"/>
<evidence type="ECO:0000250" key="1"/>
<evidence type="ECO:0000255" key="2"/>
<evidence type="ECO:0000269" key="3">
    <source ref="1"/>
</evidence>
<evidence type="ECO:0000305" key="4"/>
<name>PLY1_PECCA</name>
<accession>P0C1C0</accession>
<accession>P11430</accession>
<accession>P16529</accession>
<accession>Q06113</accession>
<accession>Q47468</accession>
<feature type="signal peptide" evidence="3">
    <location>
        <begin position="1"/>
        <end position="22"/>
    </location>
</feature>
<feature type="chain" id="PRO_0000024849" description="Pectate lyase 1">
    <location>
        <begin position="23"/>
        <end position="374"/>
    </location>
</feature>
<feature type="active site" evidence="2">
    <location>
        <position position="239"/>
    </location>
</feature>
<feature type="binding site" evidence="1">
    <location>
        <position position="150"/>
    </location>
    <ligand>
        <name>Ca(2+)</name>
        <dbReference type="ChEBI" id="CHEBI:29108"/>
    </ligand>
</feature>
<feature type="binding site" evidence="1">
    <location>
        <position position="152"/>
    </location>
    <ligand>
        <name>Ca(2+)</name>
        <dbReference type="ChEBI" id="CHEBI:29108"/>
    </ligand>
</feature>
<feature type="binding site" evidence="1">
    <location>
        <position position="187"/>
    </location>
    <ligand>
        <name>Ca(2+)</name>
        <dbReference type="ChEBI" id="CHEBI:29108"/>
    </ligand>
</feature>
<feature type="binding site" evidence="1">
    <location>
        <position position="191"/>
    </location>
    <ligand>
        <name>Ca(2+)</name>
        <dbReference type="ChEBI" id="CHEBI:29108"/>
    </ligand>
</feature>
<feature type="disulfide bond" evidence="1">
    <location>
        <begin position="93"/>
        <end position="176"/>
    </location>
</feature>
<feature type="disulfide bond" evidence="1">
    <location>
        <begin position="350"/>
        <end position="373"/>
    </location>
</feature>
<feature type="sequence conflict" description="In Ref. 1; BAA00155." evidence="4" ref="1">
    <original>A</original>
    <variation>L</variation>
    <location>
        <position position="10"/>
    </location>
</feature>
<feature type="sequence conflict" description="In Ref. 1; BAA00155." evidence="4" ref="1">
    <original>LLAAQPTMA</original>
    <variation>AARGPTDNG</variation>
    <location>
        <begin position="14"/>
        <end position="22"/>
    </location>
</feature>
<feature type="sequence conflict" description="In Ref. 1; BAA00155." evidence="4" ref="1">
    <original>I</original>
    <variation>V</variation>
    <location>
        <position position="112"/>
    </location>
</feature>
<feature type="sequence conflict" description="In Ref. 1; AA sequence." evidence="4" ref="1">
    <original>MPGGAKDGDAIRIDNS</original>
    <variation>IRAAQKMAMPSVLITR</variation>
    <location>
        <begin position="144"/>
        <end position="159"/>
    </location>
</feature>
<feature type="sequence conflict" description="In Ref. 1; BAA00155." evidence="4" ref="1">
    <original>K</original>
    <variation>N</variation>
    <location>
        <position position="331"/>
    </location>
</feature>
<feature type="sequence conflict" description="In Ref. 1; BAA00155." evidence="4" ref="1">
    <original>LAVLTAANCK</original>
    <variation>WRY</variation>
    <location>
        <begin position="365"/>
        <end position="374"/>
    </location>
</feature>
<gene>
    <name type="primary">pel1</name>
    <name type="synonym">pelA</name>
</gene>